<reference key="1">
    <citation type="journal article" date="2004" name="PLoS Biol.">
        <title>Genomic insights into methanotrophy: the complete genome sequence of Methylococcus capsulatus (Bath).</title>
        <authorList>
            <person name="Ward N.L."/>
            <person name="Larsen O."/>
            <person name="Sakwa J."/>
            <person name="Bruseth L."/>
            <person name="Khouri H.M."/>
            <person name="Durkin A.S."/>
            <person name="Dimitrov G."/>
            <person name="Jiang L."/>
            <person name="Scanlan D."/>
            <person name="Kang K.H."/>
            <person name="Lewis M.R."/>
            <person name="Nelson K.E."/>
            <person name="Methe B.A."/>
            <person name="Wu M."/>
            <person name="Heidelberg J.F."/>
            <person name="Paulsen I.T."/>
            <person name="Fouts D.E."/>
            <person name="Ravel J."/>
            <person name="Tettelin H."/>
            <person name="Ren Q."/>
            <person name="Read T.D."/>
            <person name="DeBoy R.T."/>
            <person name="Seshadri R."/>
            <person name="Salzberg S.L."/>
            <person name="Jensen H.B."/>
            <person name="Birkeland N.K."/>
            <person name="Nelson W.C."/>
            <person name="Dodson R.J."/>
            <person name="Grindhaug S.H."/>
            <person name="Holt I.E."/>
            <person name="Eidhammer I."/>
            <person name="Jonasen I."/>
            <person name="Vanaken S."/>
            <person name="Utterback T.R."/>
            <person name="Feldblyum T.V."/>
            <person name="Fraser C.M."/>
            <person name="Lillehaug J.R."/>
            <person name="Eisen J.A."/>
        </authorList>
    </citation>
    <scope>NUCLEOTIDE SEQUENCE [LARGE SCALE GENOMIC DNA]</scope>
    <source>
        <strain>ATCC 33009 / NCIMB 11132 / Bath</strain>
    </source>
</reference>
<keyword id="KW-1185">Reference proteome</keyword>
<keyword id="KW-0687">Ribonucleoprotein</keyword>
<keyword id="KW-0689">Ribosomal protein</keyword>
<protein>
    <recommendedName>
        <fullName evidence="1">Small ribosomal subunit protein bS21</fullName>
    </recommendedName>
    <alternativeName>
        <fullName evidence="2">30S ribosomal protein S21</fullName>
    </alternativeName>
</protein>
<dbReference type="EMBL" id="AE017282">
    <property type="protein sequence ID" value="AAU90994.1"/>
    <property type="molecule type" value="Genomic_DNA"/>
</dbReference>
<dbReference type="RefSeq" id="WP_010962181.1">
    <property type="nucleotide sequence ID" value="NC_002977.6"/>
</dbReference>
<dbReference type="SMR" id="Q602S0"/>
<dbReference type="STRING" id="243233.MCA2991"/>
<dbReference type="DNASU" id="3103128"/>
<dbReference type="GeneID" id="88225153"/>
<dbReference type="KEGG" id="mca:MCA2991"/>
<dbReference type="eggNOG" id="COG0828">
    <property type="taxonomic scope" value="Bacteria"/>
</dbReference>
<dbReference type="HOGENOM" id="CLU_159258_1_0_6"/>
<dbReference type="Proteomes" id="UP000006821">
    <property type="component" value="Chromosome"/>
</dbReference>
<dbReference type="GO" id="GO:1990904">
    <property type="term" value="C:ribonucleoprotein complex"/>
    <property type="evidence" value="ECO:0007669"/>
    <property type="project" value="UniProtKB-KW"/>
</dbReference>
<dbReference type="GO" id="GO:0005840">
    <property type="term" value="C:ribosome"/>
    <property type="evidence" value="ECO:0007669"/>
    <property type="project" value="UniProtKB-KW"/>
</dbReference>
<dbReference type="GO" id="GO:0003735">
    <property type="term" value="F:structural constituent of ribosome"/>
    <property type="evidence" value="ECO:0007669"/>
    <property type="project" value="InterPro"/>
</dbReference>
<dbReference type="GO" id="GO:0006412">
    <property type="term" value="P:translation"/>
    <property type="evidence" value="ECO:0007669"/>
    <property type="project" value="UniProtKB-UniRule"/>
</dbReference>
<dbReference type="Gene3D" id="1.20.5.1150">
    <property type="entry name" value="Ribosomal protein S8"/>
    <property type="match status" value="1"/>
</dbReference>
<dbReference type="HAMAP" id="MF_00358">
    <property type="entry name" value="Ribosomal_bS21"/>
    <property type="match status" value="1"/>
</dbReference>
<dbReference type="InterPro" id="IPR001911">
    <property type="entry name" value="Ribosomal_bS21"/>
</dbReference>
<dbReference type="InterPro" id="IPR018278">
    <property type="entry name" value="Ribosomal_bS21_CS"/>
</dbReference>
<dbReference type="InterPro" id="IPR038380">
    <property type="entry name" value="Ribosomal_bS21_sf"/>
</dbReference>
<dbReference type="NCBIfam" id="TIGR00030">
    <property type="entry name" value="S21p"/>
    <property type="match status" value="1"/>
</dbReference>
<dbReference type="PANTHER" id="PTHR21109">
    <property type="entry name" value="MITOCHONDRIAL 28S RIBOSOMAL PROTEIN S21"/>
    <property type="match status" value="1"/>
</dbReference>
<dbReference type="PANTHER" id="PTHR21109:SF22">
    <property type="entry name" value="SMALL RIBOSOMAL SUBUNIT PROTEIN BS21"/>
    <property type="match status" value="1"/>
</dbReference>
<dbReference type="Pfam" id="PF01165">
    <property type="entry name" value="Ribosomal_S21"/>
    <property type="match status" value="1"/>
</dbReference>
<dbReference type="PRINTS" id="PR00976">
    <property type="entry name" value="RIBOSOMALS21"/>
</dbReference>
<dbReference type="PROSITE" id="PS01181">
    <property type="entry name" value="RIBOSOMAL_S21"/>
    <property type="match status" value="1"/>
</dbReference>
<organism>
    <name type="scientific">Methylococcus capsulatus (strain ATCC 33009 / NCIMB 11132 / Bath)</name>
    <dbReference type="NCBI Taxonomy" id="243233"/>
    <lineage>
        <taxon>Bacteria</taxon>
        <taxon>Pseudomonadati</taxon>
        <taxon>Pseudomonadota</taxon>
        <taxon>Gammaproteobacteria</taxon>
        <taxon>Methylococcales</taxon>
        <taxon>Methylococcaceae</taxon>
        <taxon>Methylococcus</taxon>
    </lineage>
</organism>
<proteinExistence type="inferred from homology"/>
<name>RS21_METCA</name>
<accession>Q602S0</accession>
<gene>
    <name evidence="1" type="primary">rpsU</name>
    <name type="ordered locus">MCA2991</name>
</gene>
<evidence type="ECO:0000255" key="1">
    <source>
        <dbReference type="HAMAP-Rule" id="MF_00358"/>
    </source>
</evidence>
<evidence type="ECO:0000305" key="2"/>
<sequence>MPSIKIRENEPFEIAIRRFKRACEKAGVLSEVRRREYYEKPTEERKRKAAAAIKRHLKKLSRERFALQNLRKGRPQQ</sequence>
<feature type="chain" id="PRO_0000266706" description="Small ribosomal subunit protein bS21">
    <location>
        <begin position="1"/>
        <end position="77"/>
    </location>
</feature>
<comment type="similarity">
    <text evidence="1">Belongs to the bacterial ribosomal protein bS21 family.</text>
</comment>